<proteinExistence type="inferred from homology"/>
<accession>P0A3U6</accession>
<accession>P29112</accession>
<evidence type="ECO:0000250" key="1"/>
<evidence type="ECO:0000305" key="2"/>
<protein>
    <recommendedName>
        <fullName>Protein Atu3128</fullName>
    </recommendedName>
</protein>
<dbReference type="EMBL" id="AE007870">
    <property type="protein sequence ID" value="AAK90258.2"/>
    <property type="status" value="ALT_INIT"/>
    <property type="molecule type" value="Genomic_DNA"/>
</dbReference>
<dbReference type="PIR" id="AB2941">
    <property type="entry name" value="AB2941"/>
</dbReference>
<dbReference type="PIR" id="H98341">
    <property type="entry name" value="H98341"/>
</dbReference>
<dbReference type="RefSeq" id="NP_357473.2">
    <property type="nucleotide sequence ID" value="NC_003063.2"/>
</dbReference>
<dbReference type="RefSeq" id="WP_010972779.1">
    <property type="nucleotide sequence ID" value="NC_003063.2"/>
</dbReference>
<dbReference type="SMR" id="P0A3U6"/>
<dbReference type="STRING" id="176299.Atu3128"/>
<dbReference type="CAZy" id="GH105">
    <property type="family name" value="Glycoside Hydrolase Family 105"/>
</dbReference>
<dbReference type="EnsemblBacteria" id="AAK90258">
    <property type="protein sequence ID" value="AAK90258"/>
    <property type="gene ID" value="Atu3128"/>
</dbReference>
<dbReference type="GeneID" id="1140376"/>
<dbReference type="KEGG" id="atu:Atu3128"/>
<dbReference type="PATRIC" id="fig|176299.10.peg.2973"/>
<dbReference type="eggNOG" id="COG4225">
    <property type="taxonomic scope" value="Bacteria"/>
</dbReference>
<dbReference type="HOGENOM" id="CLU_038720_1_0_5"/>
<dbReference type="OrthoDB" id="6381507at2"/>
<dbReference type="Proteomes" id="UP000000813">
    <property type="component" value="Chromosome linear"/>
</dbReference>
<dbReference type="GO" id="GO:0016787">
    <property type="term" value="F:hydrolase activity"/>
    <property type="evidence" value="ECO:0007669"/>
    <property type="project" value="UniProtKB-KW"/>
</dbReference>
<dbReference type="GO" id="GO:0005975">
    <property type="term" value="P:carbohydrate metabolic process"/>
    <property type="evidence" value="ECO:0007669"/>
    <property type="project" value="InterPro"/>
</dbReference>
<dbReference type="Gene3D" id="1.50.10.10">
    <property type="match status" value="1"/>
</dbReference>
<dbReference type="InterPro" id="IPR008928">
    <property type="entry name" value="6-hairpin_glycosidase_sf"/>
</dbReference>
<dbReference type="InterPro" id="IPR012341">
    <property type="entry name" value="6hp_glycosidase-like_sf"/>
</dbReference>
<dbReference type="InterPro" id="IPR010905">
    <property type="entry name" value="Glyco_hydro_88"/>
</dbReference>
<dbReference type="InterPro" id="IPR052043">
    <property type="entry name" value="PolySaccharide_Degr_Enz"/>
</dbReference>
<dbReference type="PANTHER" id="PTHR33886">
    <property type="entry name" value="UNSATURATED RHAMNOGALACTURONAN HYDROLASE (EUROFUNG)"/>
    <property type="match status" value="1"/>
</dbReference>
<dbReference type="PANTHER" id="PTHR33886:SF8">
    <property type="entry name" value="UNSATURATED RHAMNOGALACTURONAN HYDROLASE (EUROFUNG)"/>
    <property type="match status" value="1"/>
</dbReference>
<dbReference type="Pfam" id="PF07470">
    <property type="entry name" value="Glyco_hydro_88"/>
    <property type="match status" value="1"/>
</dbReference>
<dbReference type="SUPFAM" id="SSF48208">
    <property type="entry name" value="Six-hairpin glycosidases"/>
    <property type="match status" value="1"/>
</dbReference>
<name>PIC1_AGRFC</name>
<gene>
    <name type="ordered locus">Atu3128</name>
    <name type="ORF">AGR_L_3363</name>
</gene>
<sequence>MGLPFQIEYGQTTGRPELIEDALRQFSAALALTADAGGLYVHGYDESRNQRWANPASGKSPAIWARAVGWLAMALVDALVILPDDSATAELRERTRRLLAGIIARQTQAGLWMQVLDNQGLAGNYAETSASAMFAYALLRAARLGLLRGEEAKAALSAGRQALAALLETRLELDEQGVARLTGIVHVAGLGGFDGNYRDGTPDYYLTEPVVSDDAKGVGPLMMAYAESLLLAR</sequence>
<feature type="chain" id="PRO_0000171598" description="Protein Atu3128">
    <location>
        <begin position="1"/>
        <end position="233"/>
    </location>
</feature>
<reference key="1">
    <citation type="journal article" date="2001" name="Science">
        <title>The genome of the natural genetic engineer Agrobacterium tumefaciens C58.</title>
        <authorList>
            <person name="Wood D.W."/>
            <person name="Setubal J.C."/>
            <person name="Kaul R."/>
            <person name="Monks D.E."/>
            <person name="Kitajima J.P."/>
            <person name="Okura V.K."/>
            <person name="Zhou Y."/>
            <person name="Chen L."/>
            <person name="Wood G.E."/>
            <person name="Almeida N.F. Jr."/>
            <person name="Woo L."/>
            <person name="Chen Y."/>
            <person name="Paulsen I.T."/>
            <person name="Eisen J.A."/>
            <person name="Karp P.D."/>
            <person name="Bovee D. Sr."/>
            <person name="Chapman P."/>
            <person name="Clendenning J."/>
            <person name="Deatherage G."/>
            <person name="Gillet W."/>
            <person name="Grant C."/>
            <person name="Kutyavin T."/>
            <person name="Levy R."/>
            <person name="Li M.-J."/>
            <person name="McClelland E."/>
            <person name="Palmieri A."/>
            <person name="Raymond C."/>
            <person name="Rouse G."/>
            <person name="Saenphimmachak C."/>
            <person name="Wu Z."/>
            <person name="Romero P."/>
            <person name="Gordon D."/>
            <person name="Zhang S."/>
            <person name="Yoo H."/>
            <person name="Tao Y."/>
            <person name="Biddle P."/>
            <person name="Jung M."/>
            <person name="Krespan W."/>
            <person name="Perry M."/>
            <person name="Gordon-Kamm B."/>
            <person name="Liao L."/>
            <person name="Kim S."/>
            <person name="Hendrick C."/>
            <person name="Zhao Z.-Y."/>
            <person name="Dolan M."/>
            <person name="Chumley F."/>
            <person name="Tingey S.V."/>
            <person name="Tomb J.-F."/>
            <person name="Gordon M.P."/>
            <person name="Olson M.V."/>
            <person name="Nester E.W."/>
        </authorList>
    </citation>
    <scope>NUCLEOTIDE SEQUENCE [LARGE SCALE GENOMIC DNA]</scope>
    <source>
        <strain>C58 / ATCC 33970</strain>
    </source>
</reference>
<reference key="2">
    <citation type="journal article" date="2001" name="Science">
        <title>Genome sequence of the plant pathogen and biotechnology agent Agrobacterium tumefaciens C58.</title>
        <authorList>
            <person name="Goodner B."/>
            <person name="Hinkle G."/>
            <person name="Gattung S."/>
            <person name="Miller N."/>
            <person name="Blanchard M."/>
            <person name="Qurollo B."/>
            <person name="Goldman B.S."/>
            <person name="Cao Y."/>
            <person name="Askenazi M."/>
            <person name="Halling C."/>
            <person name="Mullin L."/>
            <person name="Houmiel K."/>
            <person name="Gordon J."/>
            <person name="Vaudin M."/>
            <person name="Iartchouk O."/>
            <person name="Epp A."/>
            <person name="Liu F."/>
            <person name="Wollam C."/>
            <person name="Allinger M."/>
            <person name="Doughty D."/>
            <person name="Scott C."/>
            <person name="Lappas C."/>
            <person name="Markelz B."/>
            <person name="Flanagan C."/>
            <person name="Crowell C."/>
            <person name="Gurson J."/>
            <person name="Lomo C."/>
            <person name="Sear C."/>
            <person name="Strub G."/>
            <person name="Cielo C."/>
            <person name="Slater S."/>
        </authorList>
    </citation>
    <scope>NUCLEOTIDE SEQUENCE [LARGE SCALE GENOMIC DNA]</scope>
    <source>
        <strain>C58 / ATCC 33970</strain>
    </source>
</reference>
<organism>
    <name type="scientific">Agrobacterium fabrum (strain C58 / ATCC 33970)</name>
    <name type="common">Agrobacterium tumefaciens (strain C58)</name>
    <dbReference type="NCBI Taxonomy" id="176299"/>
    <lineage>
        <taxon>Bacteria</taxon>
        <taxon>Pseudomonadati</taxon>
        <taxon>Pseudomonadota</taxon>
        <taxon>Alphaproteobacteria</taxon>
        <taxon>Hyphomicrobiales</taxon>
        <taxon>Rhizobiaceae</taxon>
        <taxon>Rhizobium/Agrobacterium group</taxon>
        <taxon>Agrobacterium</taxon>
        <taxon>Agrobacterium tumefaciens complex</taxon>
    </lineage>
</organism>
<comment type="function">
    <text evidence="1">Seems to regulate the surface properties of the bacterium in the presence of plant cells or plant cell extracts. Mutations in this protein are responsible for an increased aggregation of the bacteria in the presence of pea root cap cells (By similarity).</text>
</comment>
<comment type="induction">
    <text evidence="1">By certain acidic polysaccharides found in carrot root extract. This induction may be regulated by the polygalacturonase (By similarity).</text>
</comment>
<comment type="similarity">
    <text evidence="2">Belongs to the glycosyl hydrolase 88 family.</text>
</comment>
<comment type="sequence caution" evidence="2">
    <conflict type="erroneous initiation">
        <sequence resource="EMBL-CDS" id="AAK90258"/>
    </conflict>
</comment>
<keyword id="KW-0378">Hydrolase</keyword>
<keyword id="KW-1185">Reference proteome</keyword>